<organism>
    <name type="scientific">Citrifermentans bemidjiense (strain ATCC BAA-1014 / DSM 16622 / JCM 12645 / Bem)</name>
    <name type="common">Geobacter bemidjiensis</name>
    <dbReference type="NCBI Taxonomy" id="404380"/>
    <lineage>
        <taxon>Bacteria</taxon>
        <taxon>Pseudomonadati</taxon>
        <taxon>Thermodesulfobacteriota</taxon>
        <taxon>Desulfuromonadia</taxon>
        <taxon>Geobacterales</taxon>
        <taxon>Geobacteraceae</taxon>
        <taxon>Citrifermentans</taxon>
    </lineage>
</organism>
<dbReference type="EC" id="2.1.2.11" evidence="1"/>
<dbReference type="EMBL" id="CP001124">
    <property type="protein sequence ID" value="ACH40015.1"/>
    <property type="molecule type" value="Genomic_DNA"/>
</dbReference>
<dbReference type="RefSeq" id="WP_012531445.1">
    <property type="nucleotide sequence ID" value="NC_011146.1"/>
</dbReference>
<dbReference type="SMR" id="B5E846"/>
<dbReference type="STRING" id="404380.Gbem_3012"/>
<dbReference type="KEGG" id="gbm:Gbem_3012"/>
<dbReference type="eggNOG" id="COG0413">
    <property type="taxonomic scope" value="Bacteria"/>
</dbReference>
<dbReference type="HOGENOM" id="CLU_036645_1_0_7"/>
<dbReference type="OrthoDB" id="9781789at2"/>
<dbReference type="UniPathway" id="UPA00028">
    <property type="reaction ID" value="UER00003"/>
</dbReference>
<dbReference type="Proteomes" id="UP000008825">
    <property type="component" value="Chromosome"/>
</dbReference>
<dbReference type="GO" id="GO:0005737">
    <property type="term" value="C:cytoplasm"/>
    <property type="evidence" value="ECO:0007669"/>
    <property type="project" value="UniProtKB-SubCell"/>
</dbReference>
<dbReference type="GO" id="GO:0003864">
    <property type="term" value="F:3-methyl-2-oxobutanoate hydroxymethyltransferase activity"/>
    <property type="evidence" value="ECO:0007669"/>
    <property type="project" value="UniProtKB-UniRule"/>
</dbReference>
<dbReference type="GO" id="GO:0000287">
    <property type="term" value="F:magnesium ion binding"/>
    <property type="evidence" value="ECO:0007669"/>
    <property type="project" value="TreeGrafter"/>
</dbReference>
<dbReference type="GO" id="GO:0015940">
    <property type="term" value="P:pantothenate biosynthetic process"/>
    <property type="evidence" value="ECO:0007669"/>
    <property type="project" value="UniProtKB-UniRule"/>
</dbReference>
<dbReference type="CDD" id="cd06557">
    <property type="entry name" value="KPHMT-like"/>
    <property type="match status" value="1"/>
</dbReference>
<dbReference type="FunFam" id="3.20.20.60:FF:000003">
    <property type="entry name" value="3-methyl-2-oxobutanoate hydroxymethyltransferase"/>
    <property type="match status" value="1"/>
</dbReference>
<dbReference type="Gene3D" id="3.20.20.60">
    <property type="entry name" value="Phosphoenolpyruvate-binding domains"/>
    <property type="match status" value="1"/>
</dbReference>
<dbReference type="HAMAP" id="MF_00156">
    <property type="entry name" value="PanB"/>
    <property type="match status" value="1"/>
</dbReference>
<dbReference type="InterPro" id="IPR003700">
    <property type="entry name" value="Pantoate_hydroxy_MeTrfase"/>
</dbReference>
<dbReference type="InterPro" id="IPR015813">
    <property type="entry name" value="Pyrv/PenolPyrv_kinase-like_dom"/>
</dbReference>
<dbReference type="InterPro" id="IPR040442">
    <property type="entry name" value="Pyrv_kinase-like_dom_sf"/>
</dbReference>
<dbReference type="NCBIfam" id="TIGR00222">
    <property type="entry name" value="panB"/>
    <property type="match status" value="1"/>
</dbReference>
<dbReference type="NCBIfam" id="NF001452">
    <property type="entry name" value="PRK00311.1"/>
    <property type="match status" value="1"/>
</dbReference>
<dbReference type="PANTHER" id="PTHR20881">
    <property type="entry name" value="3-METHYL-2-OXOBUTANOATE HYDROXYMETHYLTRANSFERASE"/>
    <property type="match status" value="1"/>
</dbReference>
<dbReference type="PANTHER" id="PTHR20881:SF0">
    <property type="entry name" value="3-METHYL-2-OXOBUTANOATE HYDROXYMETHYLTRANSFERASE"/>
    <property type="match status" value="1"/>
</dbReference>
<dbReference type="Pfam" id="PF02548">
    <property type="entry name" value="Pantoate_transf"/>
    <property type="match status" value="1"/>
</dbReference>
<dbReference type="PIRSF" id="PIRSF000388">
    <property type="entry name" value="Pantoate_hydroxy_MeTrfase"/>
    <property type="match status" value="1"/>
</dbReference>
<dbReference type="SUPFAM" id="SSF51621">
    <property type="entry name" value="Phosphoenolpyruvate/pyruvate domain"/>
    <property type="match status" value="1"/>
</dbReference>
<name>PANB_CITBB</name>
<reference key="1">
    <citation type="submission" date="2008-07" db="EMBL/GenBank/DDBJ databases">
        <title>Complete sequence of Geobacter bemidjiensis BEM.</title>
        <authorList>
            <consortium name="US DOE Joint Genome Institute"/>
            <person name="Lucas S."/>
            <person name="Copeland A."/>
            <person name="Lapidus A."/>
            <person name="Glavina del Rio T."/>
            <person name="Dalin E."/>
            <person name="Tice H."/>
            <person name="Bruce D."/>
            <person name="Goodwin L."/>
            <person name="Pitluck S."/>
            <person name="Kiss H."/>
            <person name="Brettin T."/>
            <person name="Detter J.C."/>
            <person name="Han C."/>
            <person name="Kuske C.R."/>
            <person name="Schmutz J."/>
            <person name="Larimer F."/>
            <person name="Land M."/>
            <person name="Hauser L."/>
            <person name="Kyrpides N."/>
            <person name="Lykidis A."/>
            <person name="Lovley D."/>
            <person name="Richardson P."/>
        </authorList>
    </citation>
    <scope>NUCLEOTIDE SEQUENCE [LARGE SCALE GENOMIC DNA]</scope>
    <source>
        <strain>ATCC BAA-1014 / DSM 16622 / JCM 12645 / Bem</strain>
    </source>
</reference>
<feature type="chain" id="PRO_1000096967" description="3-methyl-2-oxobutanoate hydroxymethyltransferase">
    <location>
        <begin position="1"/>
        <end position="267"/>
    </location>
</feature>
<feature type="active site" description="Proton acceptor" evidence="1">
    <location>
        <position position="184"/>
    </location>
</feature>
<feature type="binding site" evidence="1">
    <location>
        <begin position="46"/>
        <end position="47"/>
    </location>
    <ligand>
        <name>3-methyl-2-oxobutanoate</name>
        <dbReference type="ChEBI" id="CHEBI:11851"/>
    </ligand>
</feature>
<feature type="binding site" evidence="1">
    <location>
        <position position="46"/>
    </location>
    <ligand>
        <name>Mg(2+)</name>
        <dbReference type="ChEBI" id="CHEBI:18420"/>
    </ligand>
</feature>
<feature type="binding site" evidence="1">
    <location>
        <position position="85"/>
    </location>
    <ligand>
        <name>3-methyl-2-oxobutanoate</name>
        <dbReference type="ChEBI" id="CHEBI:11851"/>
    </ligand>
</feature>
<feature type="binding site" evidence="1">
    <location>
        <position position="85"/>
    </location>
    <ligand>
        <name>Mg(2+)</name>
        <dbReference type="ChEBI" id="CHEBI:18420"/>
    </ligand>
</feature>
<feature type="binding site" evidence="1">
    <location>
        <position position="115"/>
    </location>
    <ligand>
        <name>3-methyl-2-oxobutanoate</name>
        <dbReference type="ChEBI" id="CHEBI:11851"/>
    </ligand>
</feature>
<feature type="binding site" evidence="1">
    <location>
        <position position="117"/>
    </location>
    <ligand>
        <name>Mg(2+)</name>
        <dbReference type="ChEBI" id="CHEBI:18420"/>
    </ligand>
</feature>
<accession>B5E846</accession>
<gene>
    <name evidence="1" type="primary">panB</name>
    <name type="ordered locus">Gbem_3012</name>
</gene>
<proteinExistence type="inferred from homology"/>
<comment type="function">
    <text evidence="1">Catalyzes the reversible reaction in which hydroxymethyl group from 5,10-methylenetetrahydrofolate is transferred onto alpha-ketoisovalerate to form ketopantoate.</text>
</comment>
<comment type="catalytic activity">
    <reaction evidence="1">
        <text>3-methyl-2-oxobutanoate + (6R)-5,10-methylene-5,6,7,8-tetrahydrofolate + H2O = 2-dehydropantoate + (6S)-5,6,7,8-tetrahydrofolate</text>
        <dbReference type="Rhea" id="RHEA:11824"/>
        <dbReference type="ChEBI" id="CHEBI:11561"/>
        <dbReference type="ChEBI" id="CHEBI:11851"/>
        <dbReference type="ChEBI" id="CHEBI:15377"/>
        <dbReference type="ChEBI" id="CHEBI:15636"/>
        <dbReference type="ChEBI" id="CHEBI:57453"/>
        <dbReference type="EC" id="2.1.2.11"/>
    </reaction>
</comment>
<comment type="cofactor">
    <cofactor evidence="1">
        <name>Mg(2+)</name>
        <dbReference type="ChEBI" id="CHEBI:18420"/>
    </cofactor>
    <text evidence="1">Binds 1 Mg(2+) ion per subunit.</text>
</comment>
<comment type="pathway">
    <text evidence="1">Cofactor biosynthesis; (R)-pantothenate biosynthesis; (R)-pantoate from 3-methyl-2-oxobutanoate: step 1/2.</text>
</comment>
<comment type="subunit">
    <text evidence="1">Homodecamer; pentamer of dimers.</text>
</comment>
<comment type="subcellular location">
    <subcellularLocation>
        <location evidence="1">Cytoplasm</location>
    </subcellularLocation>
</comment>
<comment type="similarity">
    <text evidence="1">Belongs to the PanB family.</text>
</comment>
<keyword id="KW-0963">Cytoplasm</keyword>
<keyword id="KW-0460">Magnesium</keyword>
<keyword id="KW-0479">Metal-binding</keyword>
<keyword id="KW-0566">Pantothenate biosynthesis</keyword>
<keyword id="KW-1185">Reference proteome</keyword>
<keyword id="KW-0808">Transferase</keyword>
<sequence length="267" mass="28592">MQKQRTILDFQRMKAEGEKIAVLTSYDFPMTGIMDACGIDMILVGDSVGVVVAGYDNTLPVTMEDMIYHTRAVMRARPKAFVVADLPFLSYQTDLKSARLNAGLLVKDGGAAAVKIEGGVNVEETITAITDMDIPVVGHIGLTPQSLHRMGGFKVQGKGEEQAEKLMADALAVERAGAFAVVLEGIPMSLAARITAELSIPTIGIGAGPHCDGQVLVIHDILGLCSKYSPKFVKRYAELAPLIGEACSNYIAEVKGGIFPEERHGFK</sequence>
<evidence type="ECO:0000255" key="1">
    <source>
        <dbReference type="HAMAP-Rule" id="MF_00156"/>
    </source>
</evidence>
<protein>
    <recommendedName>
        <fullName evidence="1">3-methyl-2-oxobutanoate hydroxymethyltransferase</fullName>
        <ecNumber evidence="1">2.1.2.11</ecNumber>
    </recommendedName>
    <alternativeName>
        <fullName evidence="1">Ketopantoate hydroxymethyltransferase</fullName>
        <shortName evidence="1">KPHMT</shortName>
    </alternativeName>
</protein>